<sequence length="381" mass="42663">MPFSNTHNTLKLRFPAEDEFPDLSAHNNHMAKVLTPEMDAELRAKSTPSGFTLDDVIQTGVDNPGHPFIMTVGCVAGDEESYEAFKELFDPIIEDRHGGYKPSDEHKTDLNPDNLQGGDDLDPNYVLSSRVRTGRSIRGFCLPPHCSRGERRAVEKLAVEALSSLDGDLAGRYYALKSMTEAEQQQLIDDHFLFDKPVSPLLLASGMARDWPDARGIWHNDNKTFLVWINEEDHLRVISMQKGGNMKEVFTRFCNGLTQIETLFKSKNYEFMWNPHLGYILTCPSNLGTGLRAGVHIKLPHLGQHEKFSEVLKRLRLQKRGTGGVDTAAVGGVFDVSNADRLGFSEVELVQMVVDGVKLLIEMEQRLEQGQAIDDLMPAQK</sequence>
<keyword id="KW-0067">ATP-binding</keyword>
<keyword id="KW-1003">Cell membrane</keyword>
<keyword id="KW-0963">Cytoplasm</keyword>
<keyword id="KW-1017">Isopeptide bond</keyword>
<keyword id="KW-0418">Kinase</keyword>
<keyword id="KW-0472">Membrane</keyword>
<keyword id="KW-0496">Mitochondrion</keyword>
<keyword id="KW-0944">Nitration</keyword>
<keyword id="KW-0547">Nucleotide-binding</keyword>
<keyword id="KW-0597">Phosphoprotein</keyword>
<keyword id="KW-1185">Reference proteome</keyword>
<keyword id="KW-0808">Transferase</keyword>
<keyword id="KW-0832">Ubl conjugation</keyword>
<proteinExistence type="evidence at transcript level"/>
<dbReference type="EC" id="2.7.3.2"/>
<dbReference type="EMBL" id="M11306">
    <property type="protein sequence ID" value="AAA31201.1"/>
    <property type="molecule type" value="mRNA"/>
</dbReference>
<dbReference type="PIR" id="A00678">
    <property type="entry name" value="KIRBCB"/>
</dbReference>
<dbReference type="RefSeq" id="NP_001075730.1">
    <property type="nucleotide sequence ID" value="NM_001082261.1"/>
</dbReference>
<dbReference type="SMR" id="P00567"/>
<dbReference type="FunCoup" id="P00567">
    <property type="interactions" value="217"/>
</dbReference>
<dbReference type="STRING" id="9986.ENSOCUP00000046566"/>
<dbReference type="PaxDb" id="9986-ENSOCUP00000007616"/>
<dbReference type="GeneID" id="100009085"/>
<dbReference type="KEGG" id="ocu:100009085"/>
<dbReference type="CTD" id="1152"/>
<dbReference type="eggNOG" id="KOG3581">
    <property type="taxonomic scope" value="Eukaryota"/>
</dbReference>
<dbReference type="InParanoid" id="P00567"/>
<dbReference type="OrthoDB" id="430219at2759"/>
<dbReference type="Proteomes" id="UP000001811">
    <property type="component" value="Unplaced"/>
</dbReference>
<dbReference type="GO" id="GO:0005829">
    <property type="term" value="C:cytosol"/>
    <property type="evidence" value="ECO:0007669"/>
    <property type="project" value="UniProtKB-SubCell"/>
</dbReference>
<dbReference type="GO" id="GO:0005615">
    <property type="term" value="C:extracellular space"/>
    <property type="evidence" value="ECO:0007669"/>
    <property type="project" value="TreeGrafter"/>
</dbReference>
<dbReference type="GO" id="GO:0005739">
    <property type="term" value="C:mitochondrion"/>
    <property type="evidence" value="ECO:0000250"/>
    <property type="project" value="UniProtKB"/>
</dbReference>
<dbReference type="GO" id="GO:0005886">
    <property type="term" value="C:plasma membrane"/>
    <property type="evidence" value="ECO:0007669"/>
    <property type="project" value="UniProtKB-SubCell"/>
</dbReference>
<dbReference type="GO" id="GO:0005524">
    <property type="term" value="F:ATP binding"/>
    <property type="evidence" value="ECO:0007669"/>
    <property type="project" value="UniProtKB-KW"/>
</dbReference>
<dbReference type="GO" id="GO:0004111">
    <property type="term" value="F:creatine kinase activity"/>
    <property type="evidence" value="ECO:0000250"/>
    <property type="project" value="UniProtKB"/>
</dbReference>
<dbReference type="GO" id="GO:0007420">
    <property type="term" value="P:brain development"/>
    <property type="evidence" value="ECO:0000250"/>
    <property type="project" value="AgBase"/>
</dbReference>
<dbReference type="GO" id="GO:0030644">
    <property type="term" value="P:intracellular chloride ion homeostasis"/>
    <property type="evidence" value="ECO:0000250"/>
    <property type="project" value="AgBase"/>
</dbReference>
<dbReference type="GO" id="GO:0046314">
    <property type="term" value="P:phosphocreatine biosynthetic process"/>
    <property type="evidence" value="ECO:0007669"/>
    <property type="project" value="InterPro"/>
</dbReference>
<dbReference type="CDD" id="cd00716">
    <property type="entry name" value="creatine_kinase_like"/>
    <property type="match status" value="1"/>
</dbReference>
<dbReference type="FunFam" id="3.30.590.10:FF:000026">
    <property type="entry name" value="Creatine kinase B-type"/>
    <property type="match status" value="1"/>
</dbReference>
<dbReference type="FunFam" id="1.10.135.10:FF:000001">
    <property type="entry name" value="Creatine kinase M-type"/>
    <property type="match status" value="1"/>
</dbReference>
<dbReference type="Gene3D" id="1.10.135.10">
    <property type="entry name" value="ATP:guanido phosphotransferase, N-terminal domain"/>
    <property type="match status" value="1"/>
</dbReference>
<dbReference type="Gene3D" id="3.30.590.10">
    <property type="entry name" value="Glutamine synthetase/guanido kinase, catalytic domain"/>
    <property type="match status" value="1"/>
</dbReference>
<dbReference type="InterPro" id="IPR000749">
    <property type="entry name" value="ATP-guanido_PTrfase"/>
</dbReference>
<dbReference type="InterPro" id="IPR022415">
    <property type="entry name" value="ATP-guanido_PTrfase_AS"/>
</dbReference>
<dbReference type="InterPro" id="IPR022414">
    <property type="entry name" value="ATP-guanido_PTrfase_cat"/>
</dbReference>
<dbReference type="InterPro" id="IPR022413">
    <property type="entry name" value="ATP-guanido_PTrfase_N"/>
</dbReference>
<dbReference type="InterPro" id="IPR036802">
    <property type="entry name" value="ATP-guanido_PTrfase_N_sf"/>
</dbReference>
<dbReference type="InterPro" id="IPR014746">
    <property type="entry name" value="Gln_synth/guanido_kin_cat_dom"/>
</dbReference>
<dbReference type="PANTHER" id="PTHR11547">
    <property type="entry name" value="ARGININE OR CREATINE KINASE"/>
    <property type="match status" value="1"/>
</dbReference>
<dbReference type="PANTHER" id="PTHR11547:SF23">
    <property type="entry name" value="CREATINE KINASE B-TYPE"/>
    <property type="match status" value="1"/>
</dbReference>
<dbReference type="Pfam" id="PF00217">
    <property type="entry name" value="ATP-gua_Ptrans"/>
    <property type="match status" value="1"/>
</dbReference>
<dbReference type="Pfam" id="PF02807">
    <property type="entry name" value="ATP-gua_PtransN"/>
    <property type="match status" value="1"/>
</dbReference>
<dbReference type="SUPFAM" id="SSF55931">
    <property type="entry name" value="Glutamine synthetase/guanido kinase"/>
    <property type="match status" value="1"/>
</dbReference>
<dbReference type="SUPFAM" id="SSF48034">
    <property type="entry name" value="Guanido kinase N-terminal domain"/>
    <property type="match status" value="1"/>
</dbReference>
<dbReference type="PROSITE" id="PS00112">
    <property type="entry name" value="PHOSPHAGEN_KINASE"/>
    <property type="match status" value="1"/>
</dbReference>
<dbReference type="PROSITE" id="PS51510">
    <property type="entry name" value="PHOSPHAGEN_KINASE_C"/>
    <property type="match status" value="1"/>
</dbReference>
<dbReference type="PROSITE" id="PS51509">
    <property type="entry name" value="PHOSPHAGEN_KINASE_N"/>
    <property type="match status" value="1"/>
</dbReference>
<evidence type="ECO:0000250" key="1">
    <source>
        <dbReference type="UniProtKB" id="P07335"/>
    </source>
</evidence>
<evidence type="ECO:0000250" key="2">
    <source>
        <dbReference type="UniProtKB" id="P12277"/>
    </source>
</evidence>
<evidence type="ECO:0000250" key="3">
    <source>
        <dbReference type="UniProtKB" id="Q04447"/>
    </source>
</evidence>
<evidence type="ECO:0000255" key="4">
    <source>
        <dbReference type="PROSITE-ProRule" id="PRU00842"/>
    </source>
</evidence>
<evidence type="ECO:0000255" key="5">
    <source>
        <dbReference type="PROSITE-ProRule" id="PRU00843"/>
    </source>
</evidence>
<evidence type="ECO:0000255" key="6">
    <source>
        <dbReference type="PROSITE-ProRule" id="PRU10029"/>
    </source>
</evidence>
<evidence type="ECO:0000256" key="7">
    <source>
        <dbReference type="SAM" id="MobiDB-lite"/>
    </source>
</evidence>
<accession>P00567</accession>
<feature type="chain" id="PRO_0000211969" description="Creatine kinase B-type">
    <location>
        <begin position="1"/>
        <end position="381"/>
    </location>
</feature>
<feature type="domain" description="Phosphagen kinase N-terminal" evidence="4">
    <location>
        <begin position="11"/>
        <end position="98"/>
    </location>
</feature>
<feature type="domain" description="Phosphagen kinase C-terminal" evidence="5">
    <location>
        <begin position="125"/>
        <end position="367"/>
    </location>
</feature>
<feature type="region of interest" description="Disordered" evidence="7">
    <location>
        <begin position="96"/>
        <end position="123"/>
    </location>
</feature>
<feature type="region of interest" description="Internal MTS-like signal" evidence="3">
    <location>
        <begin position="130"/>
        <end position="138"/>
    </location>
</feature>
<feature type="compositionally biased region" description="Basic and acidic residues" evidence="7">
    <location>
        <begin position="96"/>
        <end position="110"/>
    </location>
</feature>
<feature type="binding site" evidence="2">
    <location>
        <position position="72"/>
    </location>
    <ligand>
        <name>creatine</name>
        <dbReference type="ChEBI" id="CHEBI:57947"/>
    </ligand>
</feature>
<feature type="binding site" evidence="5">
    <location>
        <begin position="128"/>
        <end position="132"/>
    </location>
    <ligand>
        <name>ATP</name>
        <dbReference type="ChEBI" id="CHEBI:30616"/>
    </ligand>
</feature>
<feature type="binding site" evidence="5">
    <location>
        <position position="130"/>
    </location>
    <ligand>
        <name>ATP</name>
        <dbReference type="ChEBI" id="CHEBI:30616"/>
    </ligand>
</feature>
<feature type="binding site" evidence="5">
    <location>
        <position position="132"/>
    </location>
    <ligand>
        <name>ATP</name>
        <dbReference type="ChEBI" id="CHEBI:30616"/>
    </ligand>
</feature>
<feature type="binding site" evidence="5">
    <location>
        <position position="191"/>
    </location>
    <ligand>
        <name>ATP</name>
        <dbReference type="ChEBI" id="CHEBI:30616"/>
    </ligand>
</feature>
<feature type="binding site" evidence="2">
    <location>
        <position position="232"/>
    </location>
    <ligand>
        <name>creatine</name>
        <dbReference type="ChEBI" id="CHEBI:57947"/>
    </ligand>
</feature>
<feature type="binding site" evidence="5">
    <location>
        <position position="236"/>
    </location>
    <ligand>
        <name>ATP</name>
        <dbReference type="ChEBI" id="CHEBI:30616"/>
    </ligand>
</feature>
<feature type="binding site" evidence="2">
    <location>
        <position position="285"/>
    </location>
    <ligand>
        <name>creatine</name>
        <dbReference type="ChEBI" id="CHEBI:57947"/>
    </ligand>
</feature>
<feature type="binding site" evidence="5">
    <location>
        <position position="292"/>
    </location>
    <ligand>
        <name>ATP</name>
        <dbReference type="ChEBI" id="CHEBI:30616"/>
    </ligand>
</feature>
<feature type="binding site" evidence="5">
    <location>
        <begin position="320"/>
        <end position="325"/>
    </location>
    <ligand>
        <name>ATP</name>
        <dbReference type="ChEBI" id="CHEBI:30616"/>
    </ligand>
</feature>
<feature type="binding site" evidence="5">
    <location>
        <position position="320"/>
    </location>
    <ligand>
        <name>ATP</name>
        <dbReference type="ChEBI" id="CHEBI:30616"/>
    </ligand>
</feature>
<feature type="binding site" evidence="5">
    <location>
        <position position="335"/>
    </location>
    <ligand>
        <name>ATP</name>
        <dbReference type="ChEBI" id="CHEBI:30616"/>
    </ligand>
</feature>
<feature type="modified residue" description="Phosphoserine" evidence="2">
    <location>
        <position position="4"/>
    </location>
</feature>
<feature type="modified residue" description="Phosphothreonine" evidence="2">
    <location>
        <position position="35"/>
    </location>
</feature>
<feature type="modified residue" description="Phosphotyrosine" evidence="3">
    <location>
        <position position="125"/>
    </location>
</feature>
<feature type="modified residue" description="Phosphoserine" evidence="2">
    <location>
        <position position="199"/>
    </location>
</feature>
<feature type="modified residue" description="3'-nitrotyrosine" evidence="3">
    <location>
        <position position="269"/>
    </location>
</feature>
<feature type="modified residue" description="Phosphoserine" evidence="1">
    <location>
        <position position="309"/>
    </location>
</feature>
<feature type="modified residue" description="Phosphothreonine" evidence="3">
    <location>
        <position position="322"/>
    </location>
</feature>
<feature type="cross-link" description="Glycyl lysine isopeptide (Lys-Gly) (interchain with G-Cter in ubiquitin)" evidence="2">
    <location>
        <position position="45"/>
    </location>
</feature>
<feature type="cross-link" description="Glycyl lysine isopeptide (Lys-Gly) (interchain with G-Cter in ubiquitin)" evidence="2">
    <location>
        <position position="101"/>
    </location>
</feature>
<feature type="cross-link" description="Glycyl lysine isopeptide (Lys-Gly) (interchain with G-Cter in ubiquitin)" evidence="2">
    <location>
        <position position="107"/>
    </location>
</feature>
<feature type="cross-link" description="Glycyl lysine isopeptide (Lys-Gly) (interchain with G-Cter in ubiquitin)" evidence="2">
    <location>
        <position position="381"/>
    </location>
</feature>
<name>KCRB_RABIT</name>
<reference key="1">
    <citation type="journal article" date="1985" name="Proc. Natl. Acad. Sci. U.S.A.">
        <title>Two tissue-specific isozymes of creatine kinase have closely matched amino acid sequences.</title>
        <authorList>
            <person name="Pickering L."/>
            <person name="Pang H."/>
            <person name="Biemann K."/>
            <person name="Munro H."/>
            <person name="Schimmel P."/>
        </authorList>
    </citation>
    <scope>NUCLEOTIDE SEQUENCE [MRNA]</scope>
</reference>
<organism>
    <name type="scientific">Oryctolagus cuniculus</name>
    <name type="common">Rabbit</name>
    <dbReference type="NCBI Taxonomy" id="9986"/>
    <lineage>
        <taxon>Eukaryota</taxon>
        <taxon>Metazoa</taxon>
        <taxon>Chordata</taxon>
        <taxon>Craniata</taxon>
        <taxon>Vertebrata</taxon>
        <taxon>Euteleostomi</taxon>
        <taxon>Mammalia</taxon>
        <taxon>Eutheria</taxon>
        <taxon>Euarchontoglires</taxon>
        <taxon>Glires</taxon>
        <taxon>Lagomorpha</taxon>
        <taxon>Leporidae</taxon>
        <taxon>Oryctolagus</taxon>
    </lineage>
</organism>
<protein>
    <recommendedName>
        <fullName>Creatine kinase B-type</fullName>
        <ecNumber>2.7.3.2</ecNumber>
    </recommendedName>
    <alternativeName>
        <fullName>B-CK</fullName>
    </alternativeName>
    <alternativeName>
        <fullName>Creatine kinase B chain</fullName>
    </alternativeName>
    <alternativeName>
        <fullName>Creatine phosphokinase M-type</fullName>
        <shortName>CPK-B</shortName>
    </alternativeName>
</protein>
<gene>
    <name type="primary">CKB</name>
</gene>
<comment type="function">
    <text evidence="3">Reversibly catalyzes the transfer of phosphate between ATP and various phosphogens (e.g. creatine phosphate). Creatine kinase isoenzymes play a central role in energy transduction in tissues with large, fluctuating energy demands, such as skeletal muscle, heart, brain and spermatozoa. Acts as a key regulator of adaptive thermogenesis as part of the futile creatine cycle: localizes to the mitochondria of thermogenic fat cells and acts by mediating phosphorylation of creatine to initiate a futile cycle of creatine phosphorylation and dephosphorylation. During the futile creatine cycle, creatine and N-phosphocreatine are in a futile cycle, which dissipates the high energy charge of N-phosphocreatine as heat without performing any mechanical or chemical work.</text>
</comment>
<comment type="catalytic activity">
    <reaction evidence="3 6">
        <text>creatine + ATP = N-phosphocreatine + ADP + H(+)</text>
        <dbReference type="Rhea" id="RHEA:17157"/>
        <dbReference type="ChEBI" id="CHEBI:15378"/>
        <dbReference type="ChEBI" id="CHEBI:30616"/>
        <dbReference type="ChEBI" id="CHEBI:57947"/>
        <dbReference type="ChEBI" id="CHEBI:58092"/>
        <dbReference type="ChEBI" id="CHEBI:456216"/>
        <dbReference type="EC" id="2.7.3.2"/>
    </reaction>
    <physiologicalReaction direction="left-to-right" evidence="3">
        <dbReference type="Rhea" id="RHEA:17158"/>
    </physiologicalReaction>
</comment>
<comment type="subunit">
    <text evidence="2">Dimer of identical or non-identical chains, which can be either B (brain type) or M (muscle type). With MM being the major form in skeletal muscle and myocardium, MB existing in myocardium, and BB existing in many tissues, especially brain. Interacts with SLC12A6 (via C-terminus); the interaction may be required for SLC12A6 potassium-chloride cotransport activity (By similarity).</text>
</comment>
<comment type="subcellular location">
    <subcellularLocation>
        <location evidence="3">Cytoplasm</location>
        <location evidence="3">Cytosol</location>
    </subcellularLocation>
    <subcellularLocation>
        <location evidence="3">Mitochondrion</location>
    </subcellularLocation>
    <subcellularLocation>
        <location evidence="2">Cell membrane</location>
    </subcellularLocation>
    <text evidence="3">Localizes to the mitochondria of thermogenic fat cells via the internal MTS-like signal (iMTS-L) region.</text>
</comment>
<comment type="domain">
    <text evidence="3">The internal MTS-like signal (iMTS-L) mediates targeting to mitochondria thermogenic fat cells.</text>
</comment>
<comment type="PTM">
    <text evidence="2">Ubiquitinated by the ECS(ASB9) complex, leading to its degradation by the proteasome.</text>
</comment>
<comment type="similarity">
    <text evidence="4 5">Belongs to the ATP:guanido phosphotransferase family.</text>
</comment>